<sequence length="463" mass="50307">MGKEKIHINIVVIGHVDSGKSTTTGHLIYKCGGIDKRTIEKFEKEAQEMGKGSFKYAWVLDKLKAERERGITIDIALWKFETAKYYVTIIDAPGHRDFIKNMITGTSQADCAVLIVAAGTGEFEAGISKNGQTREHALLAFTLGVKQLIVGVNKMDSSEPPYSEARYEEIKKEVSSYIKKIGYNPAAVAFVPISGWHGDNMLEPSTNMPWFKGWKVERKEGNADGKTLIDALDAILPPARPTDKALRLPLQDVYKIGGIGTVPVGRVETGVLKPGTVVVFAPANITTEVKSVEMHHEALQEAVPGDNVGFNVKNVSVKELRRGYVAGDSKANPPKGAADFTAQVIVLNHPGQIANGYTPVLDCHTAHIACKFAEIKEKVDRRSGKTTEENPKFIKSGDAAIVNLVPSKPLCVEAFQEFPPLGRFAVRDMRQTVAVGVIKAVNFKDASGGKVTKAAEKATKGKK</sequence>
<accession>P08736</accession>
<accession>C6TP87</accession>
<accession>Q0E9B9</accession>
<accession>Q9V631</accession>
<name>EF1A1_DROME</name>
<proteinExistence type="evidence at protein level"/>
<keyword id="KW-0963">Cytoplasm</keyword>
<keyword id="KW-0903">Direct protein sequencing</keyword>
<keyword id="KW-0251">Elongation factor</keyword>
<keyword id="KW-0342">GTP-binding</keyword>
<keyword id="KW-0547">Nucleotide-binding</keyword>
<keyword id="KW-0597">Phosphoprotein</keyword>
<keyword id="KW-0648">Protein biosynthesis</keyword>
<keyword id="KW-1185">Reference proteome</keyword>
<dbReference type="EMBL" id="M11744">
    <property type="protein sequence ID" value="AAA28526.1"/>
    <property type="molecule type" value="Genomic_DNA"/>
</dbReference>
<dbReference type="EMBL" id="X06869">
    <property type="protein sequence ID" value="CAA29993.1"/>
    <property type="molecule type" value="Genomic_DNA"/>
</dbReference>
<dbReference type="EMBL" id="AE013599">
    <property type="protein sequence ID" value="AAF58608.1"/>
    <property type="molecule type" value="Genomic_DNA"/>
</dbReference>
<dbReference type="EMBL" id="AE013599">
    <property type="protein sequence ID" value="AHN56119.1"/>
    <property type="molecule type" value="Genomic_DNA"/>
</dbReference>
<dbReference type="EMBL" id="AE013599">
    <property type="protein sequence ID" value="AHN56120.1"/>
    <property type="molecule type" value="Genomic_DNA"/>
</dbReference>
<dbReference type="EMBL" id="BT011039">
    <property type="protein sequence ID" value="AAR30199.1"/>
    <property type="molecule type" value="mRNA"/>
</dbReference>
<dbReference type="EMBL" id="BT099573">
    <property type="protein sequence ID" value="ACU43535.1"/>
    <property type="molecule type" value="mRNA"/>
</dbReference>
<dbReference type="PIR" id="S00676">
    <property type="entry name" value="S00676"/>
</dbReference>
<dbReference type="RefSeq" id="NP_001286321.1">
    <property type="nucleotide sequence ID" value="NM_001299392.1"/>
</dbReference>
<dbReference type="RefSeq" id="NP_001286322.1">
    <property type="nucleotide sequence ID" value="NM_001299393.1"/>
</dbReference>
<dbReference type="RefSeq" id="NP_477375.1">
    <property type="nucleotide sequence ID" value="NM_058027.5"/>
</dbReference>
<dbReference type="RefSeq" id="NP_725085.1">
    <property type="nucleotide sequence ID" value="NM_165850.3"/>
</dbReference>
<dbReference type="SMR" id="P08736"/>
<dbReference type="BioGRID" id="62056">
    <property type="interactions" value="65"/>
</dbReference>
<dbReference type="FunCoup" id="P08736">
    <property type="interactions" value="932"/>
</dbReference>
<dbReference type="IntAct" id="P08736">
    <property type="interactions" value="5"/>
</dbReference>
<dbReference type="MINT" id="P08736"/>
<dbReference type="STRING" id="7227.FBpp0304260"/>
<dbReference type="PaxDb" id="7227-FBpp0304260"/>
<dbReference type="DNASU" id="36271"/>
<dbReference type="EnsemblMetazoa" id="FBtr0088035">
    <property type="protein sequence ID" value="FBpp0087142"/>
    <property type="gene ID" value="FBgn0284245"/>
</dbReference>
<dbReference type="EnsemblMetazoa" id="FBtr0331927">
    <property type="protein sequence ID" value="FBpp0304260"/>
    <property type="gene ID" value="FBgn0284245"/>
</dbReference>
<dbReference type="EnsemblMetazoa" id="FBtr0345022">
    <property type="protein sequence ID" value="FBpp0311272"/>
    <property type="gene ID" value="FBgn0284245"/>
</dbReference>
<dbReference type="EnsemblMetazoa" id="FBtr0345023">
    <property type="protein sequence ID" value="FBpp0311273"/>
    <property type="gene ID" value="FBgn0284245"/>
</dbReference>
<dbReference type="GeneID" id="36271"/>
<dbReference type="KEGG" id="dme:Dmel_CG8280"/>
<dbReference type="AGR" id="FB:FBgn0284245"/>
<dbReference type="CTD" id="36271"/>
<dbReference type="FlyBase" id="FBgn0284245">
    <property type="gene designation" value="eEF1alpha1"/>
</dbReference>
<dbReference type="VEuPathDB" id="VectorBase:FBgn0284245"/>
<dbReference type="eggNOG" id="KOG0052">
    <property type="taxonomic scope" value="Eukaryota"/>
</dbReference>
<dbReference type="GeneTree" id="ENSGT00940000164334"/>
<dbReference type="HOGENOM" id="CLU_007265_3_5_1"/>
<dbReference type="InParanoid" id="P08736"/>
<dbReference type="OMA" id="DMRNTVA"/>
<dbReference type="OrthoDB" id="342024at2759"/>
<dbReference type="PhylomeDB" id="P08736"/>
<dbReference type="Reactome" id="R-DME-156842">
    <property type="pathway name" value="Eukaryotic Translation Elongation"/>
</dbReference>
<dbReference type="Reactome" id="R-DME-3371511">
    <property type="pathway name" value="HSF1 activation"/>
</dbReference>
<dbReference type="Reactome" id="R-DME-6798695">
    <property type="pathway name" value="Neutrophil degranulation"/>
</dbReference>
<dbReference type="Reactome" id="R-DME-8876725">
    <property type="pathway name" value="Protein methylation"/>
</dbReference>
<dbReference type="SignaLink" id="P08736"/>
<dbReference type="ChiTaRS" id="Ef1alpha48D">
    <property type="organism name" value="fly"/>
</dbReference>
<dbReference type="GenomeRNAi" id="36271"/>
<dbReference type="PRO" id="PR:P08736"/>
<dbReference type="Proteomes" id="UP000000803">
    <property type="component" value="Chromosome 2R"/>
</dbReference>
<dbReference type="Bgee" id="FBgn0284245">
    <property type="expression patterns" value="Expressed in cleaving embryo and 293 other cell types or tissues"/>
</dbReference>
<dbReference type="ExpressionAtlas" id="P08736">
    <property type="expression patterns" value="baseline and differential"/>
</dbReference>
<dbReference type="GO" id="GO:0005737">
    <property type="term" value="C:cytoplasm"/>
    <property type="evidence" value="ECO:0007669"/>
    <property type="project" value="UniProtKB-SubCell"/>
</dbReference>
<dbReference type="GO" id="GO:0005525">
    <property type="term" value="F:GTP binding"/>
    <property type="evidence" value="ECO:0007669"/>
    <property type="project" value="UniProtKB-KW"/>
</dbReference>
<dbReference type="GO" id="GO:0003924">
    <property type="term" value="F:GTPase activity"/>
    <property type="evidence" value="ECO:0000318"/>
    <property type="project" value="GO_Central"/>
</dbReference>
<dbReference type="GO" id="GO:0003746">
    <property type="term" value="F:translation elongation factor activity"/>
    <property type="evidence" value="ECO:0000318"/>
    <property type="project" value="GO_Central"/>
</dbReference>
<dbReference type="GO" id="GO:0006412">
    <property type="term" value="P:translation"/>
    <property type="evidence" value="ECO:0000318"/>
    <property type="project" value="GO_Central"/>
</dbReference>
<dbReference type="GO" id="GO:0006414">
    <property type="term" value="P:translational elongation"/>
    <property type="evidence" value="ECO:0000318"/>
    <property type="project" value="GO_Central"/>
</dbReference>
<dbReference type="CDD" id="cd01883">
    <property type="entry name" value="EF1_alpha"/>
    <property type="match status" value="1"/>
</dbReference>
<dbReference type="CDD" id="cd03693">
    <property type="entry name" value="EF1_alpha_II"/>
    <property type="match status" value="1"/>
</dbReference>
<dbReference type="CDD" id="cd03705">
    <property type="entry name" value="EF1_alpha_III"/>
    <property type="match status" value="1"/>
</dbReference>
<dbReference type="FunFam" id="2.40.30.10:FF:000003">
    <property type="entry name" value="Elongation factor 1-alpha"/>
    <property type="match status" value="1"/>
</dbReference>
<dbReference type="FunFam" id="2.40.30.10:FF:000005">
    <property type="entry name" value="Elongation factor 1-alpha"/>
    <property type="match status" value="1"/>
</dbReference>
<dbReference type="FunFam" id="3.40.50.300:FF:000090">
    <property type="entry name" value="Elongation factor 1-alpha"/>
    <property type="match status" value="1"/>
</dbReference>
<dbReference type="Gene3D" id="3.40.50.300">
    <property type="entry name" value="P-loop containing nucleotide triphosphate hydrolases"/>
    <property type="match status" value="1"/>
</dbReference>
<dbReference type="Gene3D" id="2.40.30.10">
    <property type="entry name" value="Translation factors"/>
    <property type="match status" value="2"/>
</dbReference>
<dbReference type="HAMAP" id="MF_00118_A">
    <property type="entry name" value="EF_Tu_A"/>
    <property type="match status" value="1"/>
</dbReference>
<dbReference type="InterPro" id="IPR004161">
    <property type="entry name" value="EFTu-like_2"/>
</dbReference>
<dbReference type="InterPro" id="IPR031157">
    <property type="entry name" value="G_TR_CS"/>
</dbReference>
<dbReference type="InterPro" id="IPR054696">
    <property type="entry name" value="GTP-eEF1A_C"/>
</dbReference>
<dbReference type="InterPro" id="IPR027417">
    <property type="entry name" value="P-loop_NTPase"/>
</dbReference>
<dbReference type="InterPro" id="IPR000795">
    <property type="entry name" value="T_Tr_GTP-bd_dom"/>
</dbReference>
<dbReference type="InterPro" id="IPR050100">
    <property type="entry name" value="TRAFAC_GTPase_members"/>
</dbReference>
<dbReference type="InterPro" id="IPR009000">
    <property type="entry name" value="Transl_B-barrel_sf"/>
</dbReference>
<dbReference type="InterPro" id="IPR009001">
    <property type="entry name" value="Transl_elong_EF1A/Init_IF2_C"/>
</dbReference>
<dbReference type="InterPro" id="IPR004539">
    <property type="entry name" value="Transl_elong_EF1A_euk/arc"/>
</dbReference>
<dbReference type="NCBIfam" id="TIGR00483">
    <property type="entry name" value="EF-1_alpha"/>
    <property type="match status" value="1"/>
</dbReference>
<dbReference type="NCBIfam" id="NF008969">
    <property type="entry name" value="PRK12317.1"/>
    <property type="match status" value="1"/>
</dbReference>
<dbReference type="PANTHER" id="PTHR23115">
    <property type="entry name" value="TRANSLATION FACTOR"/>
    <property type="match status" value="1"/>
</dbReference>
<dbReference type="Pfam" id="PF22594">
    <property type="entry name" value="GTP-eEF1A_C"/>
    <property type="match status" value="1"/>
</dbReference>
<dbReference type="Pfam" id="PF00009">
    <property type="entry name" value="GTP_EFTU"/>
    <property type="match status" value="1"/>
</dbReference>
<dbReference type="Pfam" id="PF03144">
    <property type="entry name" value="GTP_EFTU_D2"/>
    <property type="match status" value="1"/>
</dbReference>
<dbReference type="PRINTS" id="PR00315">
    <property type="entry name" value="ELONGATNFCT"/>
</dbReference>
<dbReference type="SUPFAM" id="SSF50465">
    <property type="entry name" value="EF-Tu/eEF-1alpha/eIF2-gamma C-terminal domain"/>
    <property type="match status" value="1"/>
</dbReference>
<dbReference type="SUPFAM" id="SSF52540">
    <property type="entry name" value="P-loop containing nucleoside triphosphate hydrolases"/>
    <property type="match status" value="1"/>
</dbReference>
<dbReference type="SUPFAM" id="SSF50447">
    <property type="entry name" value="Translation proteins"/>
    <property type="match status" value="1"/>
</dbReference>
<dbReference type="PROSITE" id="PS00301">
    <property type="entry name" value="G_TR_1"/>
    <property type="match status" value="1"/>
</dbReference>
<dbReference type="PROSITE" id="PS51722">
    <property type="entry name" value="G_TR_2"/>
    <property type="match status" value="1"/>
</dbReference>
<organism>
    <name type="scientific">Drosophila melanogaster</name>
    <name type="common">Fruit fly</name>
    <dbReference type="NCBI Taxonomy" id="7227"/>
    <lineage>
        <taxon>Eukaryota</taxon>
        <taxon>Metazoa</taxon>
        <taxon>Ecdysozoa</taxon>
        <taxon>Arthropoda</taxon>
        <taxon>Hexapoda</taxon>
        <taxon>Insecta</taxon>
        <taxon>Pterygota</taxon>
        <taxon>Neoptera</taxon>
        <taxon>Endopterygota</taxon>
        <taxon>Diptera</taxon>
        <taxon>Brachycera</taxon>
        <taxon>Muscomorpha</taxon>
        <taxon>Ephydroidea</taxon>
        <taxon>Drosophilidae</taxon>
        <taxon>Drosophila</taxon>
        <taxon>Sophophora</taxon>
    </lineage>
</organism>
<feature type="chain" id="PRO_0000090906" description="Elongation factor 1-alpha 1">
    <location>
        <begin position="1"/>
        <end position="463"/>
    </location>
</feature>
<feature type="domain" description="tr-type G">
    <location>
        <begin position="5"/>
        <end position="242"/>
    </location>
</feature>
<feature type="region of interest" description="G1" evidence="1">
    <location>
        <begin position="14"/>
        <end position="21"/>
    </location>
</feature>
<feature type="region of interest" description="G2" evidence="1">
    <location>
        <begin position="70"/>
        <end position="74"/>
    </location>
</feature>
<feature type="region of interest" description="G3" evidence="1">
    <location>
        <begin position="91"/>
        <end position="94"/>
    </location>
</feature>
<feature type="region of interest" description="G4" evidence="1">
    <location>
        <begin position="153"/>
        <end position="156"/>
    </location>
</feature>
<feature type="region of interest" description="G5" evidence="1">
    <location>
        <begin position="194"/>
        <end position="196"/>
    </location>
</feature>
<feature type="binding site" evidence="1">
    <location>
        <begin position="14"/>
        <end position="21"/>
    </location>
    <ligand>
        <name>GTP</name>
        <dbReference type="ChEBI" id="CHEBI:37565"/>
    </ligand>
</feature>
<feature type="binding site" evidence="1">
    <location>
        <begin position="91"/>
        <end position="95"/>
    </location>
    <ligand>
        <name>GTP</name>
        <dbReference type="ChEBI" id="CHEBI:37565"/>
    </ligand>
</feature>
<feature type="binding site" evidence="1">
    <location>
        <begin position="153"/>
        <end position="156"/>
    </location>
    <ligand>
        <name>GTP</name>
        <dbReference type="ChEBI" id="CHEBI:37565"/>
    </ligand>
</feature>
<feature type="modified residue" description="5-glutamyl glycerylphosphorylethanolamine" evidence="4">
    <location>
        <position position="301"/>
    </location>
</feature>
<feature type="modified residue" description="5-glutamyl glycerylphosphorylethanolamine" evidence="1">
    <location>
        <position position="374"/>
    </location>
</feature>
<feature type="sequence conflict" description="In Ref. 1; AAA28526 and 2; CAA29993." evidence="3" ref="1 2">
    <original>LIV</original>
    <variation>QID</variation>
    <location>
        <begin position="114"/>
        <end position="116"/>
    </location>
</feature>
<feature type="sequence conflict" description="In Ref. 1; AAA28526 and 2; CAA29993." evidence="3" ref="1 2">
    <original>G</original>
    <variation>D</variation>
    <location>
        <position position="131"/>
    </location>
</feature>
<feature type="sequence conflict" description="In Ref. 1; AAA28526 and 2; CAA29993." evidence="3" ref="1 2">
    <original>I</original>
    <variation>V</variation>
    <location>
        <position position="181"/>
    </location>
</feature>
<feature type="sequence conflict" description="In Ref. 1; AAA28526 and 2; CAA29993." evidence="3" ref="1 2">
    <original>KVE</original>
    <variation>EVG</variation>
    <location>
        <begin position="215"/>
        <end position="217"/>
    </location>
</feature>
<feature type="sequence conflict" description="In Ref. 1; AAA28526 and 2; CAA29993." evidence="3" ref="1 2">
    <original>I</original>
    <variation>V</variation>
    <location>
        <position position="229"/>
    </location>
</feature>
<feature type="sequence conflict" description="In Ref. 1; AAA28526 and 2; CAA29993." evidence="3" ref="1 2">
    <original>K</original>
    <variation>L</variation>
    <location>
        <position position="376"/>
    </location>
</feature>
<protein>
    <recommendedName>
        <fullName evidence="5">Elongation factor 1-alpha 1</fullName>
        <shortName evidence="5">EF-1-alpha-1</shortName>
    </recommendedName>
    <alternativeName>
        <fullName>50 kDa female-specific protein</fullName>
    </alternativeName>
</protein>
<reference key="1">
    <citation type="journal article" date="1985" name="Proc. Natl. Acad. Sci. U.S.A.">
        <title>F1 and F2: two similar genes regulated differently during development of Drosophila melanogaster.</title>
        <authorList>
            <person name="Walldorf U."/>
            <person name="Hovemann B."/>
            <person name="Bautz E.K.F."/>
        </authorList>
    </citation>
    <scope>NUCLEOTIDE SEQUENCE [GENOMIC DNA]</scope>
</reference>
<reference key="2">
    <citation type="journal article" date="1988" name="Nucleic Acids Res.">
        <title>Two genes encode related cytoplasmic elongation factors 1 alpha (EF-1 alpha) in Drosophila melanogaster with continuous and stage specific expression.</title>
        <authorList>
            <person name="Hovemann B."/>
            <person name="Richter S."/>
            <person name="Walldorf U."/>
            <person name="Cziepluch C."/>
        </authorList>
    </citation>
    <scope>NUCLEOTIDE SEQUENCE [GENOMIC DNA]</scope>
    <source>
        <strain>Canton-S</strain>
        <tissue>Embryo</tissue>
        <tissue>Pupae</tissue>
    </source>
</reference>
<reference key="3">
    <citation type="journal article" date="2000" name="Science">
        <title>The genome sequence of Drosophila melanogaster.</title>
        <authorList>
            <person name="Adams M.D."/>
            <person name="Celniker S.E."/>
            <person name="Holt R.A."/>
            <person name="Evans C.A."/>
            <person name="Gocayne J.D."/>
            <person name="Amanatides P.G."/>
            <person name="Scherer S.E."/>
            <person name="Li P.W."/>
            <person name="Hoskins R.A."/>
            <person name="Galle R.F."/>
            <person name="George R.A."/>
            <person name="Lewis S.E."/>
            <person name="Richards S."/>
            <person name="Ashburner M."/>
            <person name="Henderson S.N."/>
            <person name="Sutton G.G."/>
            <person name="Wortman J.R."/>
            <person name="Yandell M.D."/>
            <person name="Zhang Q."/>
            <person name="Chen L.X."/>
            <person name="Brandon R.C."/>
            <person name="Rogers Y.-H.C."/>
            <person name="Blazej R.G."/>
            <person name="Champe M."/>
            <person name="Pfeiffer B.D."/>
            <person name="Wan K.H."/>
            <person name="Doyle C."/>
            <person name="Baxter E.G."/>
            <person name="Helt G."/>
            <person name="Nelson C.R."/>
            <person name="Miklos G.L.G."/>
            <person name="Abril J.F."/>
            <person name="Agbayani A."/>
            <person name="An H.-J."/>
            <person name="Andrews-Pfannkoch C."/>
            <person name="Baldwin D."/>
            <person name="Ballew R.M."/>
            <person name="Basu A."/>
            <person name="Baxendale J."/>
            <person name="Bayraktaroglu L."/>
            <person name="Beasley E.M."/>
            <person name="Beeson K.Y."/>
            <person name="Benos P.V."/>
            <person name="Berman B.P."/>
            <person name="Bhandari D."/>
            <person name="Bolshakov S."/>
            <person name="Borkova D."/>
            <person name="Botchan M.R."/>
            <person name="Bouck J."/>
            <person name="Brokstein P."/>
            <person name="Brottier P."/>
            <person name="Burtis K.C."/>
            <person name="Busam D.A."/>
            <person name="Butler H."/>
            <person name="Cadieu E."/>
            <person name="Center A."/>
            <person name="Chandra I."/>
            <person name="Cherry J.M."/>
            <person name="Cawley S."/>
            <person name="Dahlke C."/>
            <person name="Davenport L.B."/>
            <person name="Davies P."/>
            <person name="de Pablos B."/>
            <person name="Delcher A."/>
            <person name="Deng Z."/>
            <person name="Mays A.D."/>
            <person name="Dew I."/>
            <person name="Dietz S.M."/>
            <person name="Dodson K."/>
            <person name="Doup L.E."/>
            <person name="Downes M."/>
            <person name="Dugan-Rocha S."/>
            <person name="Dunkov B.C."/>
            <person name="Dunn P."/>
            <person name="Durbin K.J."/>
            <person name="Evangelista C.C."/>
            <person name="Ferraz C."/>
            <person name="Ferriera S."/>
            <person name="Fleischmann W."/>
            <person name="Fosler C."/>
            <person name="Gabrielian A.E."/>
            <person name="Garg N.S."/>
            <person name="Gelbart W.M."/>
            <person name="Glasser K."/>
            <person name="Glodek A."/>
            <person name="Gong F."/>
            <person name="Gorrell J.H."/>
            <person name="Gu Z."/>
            <person name="Guan P."/>
            <person name="Harris M."/>
            <person name="Harris N.L."/>
            <person name="Harvey D.A."/>
            <person name="Heiman T.J."/>
            <person name="Hernandez J.R."/>
            <person name="Houck J."/>
            <person name="Hostin D."/>
            <person name="Houston K.A."/>
            <person name="Howland T.J."/>
            <person name="Wei M.-H."/>
            <person name="Ibegwam C."/>
            <person name="Jalali M."/>
            <person name="Kalush F."/>
            <person name="Karpen G.H."/>
            <person name="Ke Z."/>
            <person name="Kennison J.A."/>
            <person name="Ketchum K.A."/>
            <person name="Kimmel B.E."/>
            <person name="Kodira C.D."/>
            <person name="Kraft C.L."/>
            <person name="Kravitz S."/>
            <person name="Kulp D."/>
            <person name="Lai Z."/>
            <person name="Lasko P."/>
            <person name="Lei Y."/>
            <person name="Levitsky A.A."/>
            <person name="Li J.H."/>
            <person name="Li Z."/>
            <person name="Liang Y."/>
            <person name="Lin X."/>
            <person name="Liu X."/>
            <person name="Mattei B."/>
            <person name="McIntosh T.C."/>
            <person name="McLeod M.P."/>
            <person name="McPherson D."/>
            <person name="Merkulov G."/>
            <person name="Milshina N.V."/>
            <person name="Mobarry C."/>
            <person name="Morris J."/>
            <person name="Moshrefi A."/>
            <person name="Mount S.M."/>
            <person name="Moy M."/>
            <person name="Murphy B."/>
            <person name="Murphy L."/>
            <person name="Muzny D.M."/>
            <person name="Nelson D.L."/>
            <person name="Nelson D.R."/>
            <person name="Nelson K.A."/>
            <person name="Nixon K."/>
            <person name="Nusskern D.R."/>
            <person name="Pacleb J.M."/>
            <person name="Palazzolo M."/>
            <person name="Pittman G.S."/>
            <person name="Pan S."/>
            <person name="Pollard J."/>
            <person name="Puri V."/>
            <person name="Reese M.G."/>
            <person name="Reinert K."/>
            <person name="Remington K."/>
            <person name="Saunders R.D.C."/>
            <person name="Scheeler F."/>
            <person name="Shen H."/>
            <person name="Shue B.C."/>
            <person name="Siden-Kiamos I."/>
            <person name="Simpson M."/>
            <person name="Skupski M.P."/>
            <person name="Smith T.J."/>
            <person name="Spier E."/>
            <person name="Spradling A.C."/>
            <person name="Stapleton M."/>
            <person name="Strong R."/>
            <person name="Sun E."/>
            <person name="Svirskas R."/>
            <person name="Tector C."/>
            <person name="Turner R."/>
            <person name="Venter E."/>
            <person name="Wang A.H."/>
            <person name="Wang X."/>
            <person name="Wang Z.-Y."/>
            <person name="Wassarman D.A."/>
            <person name="Weinstock G.M."/>
            <person name="Weissenbach J."/>
            <person name="Williams S.M."/>
            <person name="Woodage T."/>
            <person name="Worley K.C."/>
            <person name="Wu D."/>
            <person name="Yang S."/>
            <person name="Yao Q.A."/>
            <person name="Ye J."/>
            <person name="Yeh R.-F."/>
            <person name="Zaveri J.S."/>
            <person name="Zhan M."/>
            <person name="Zhang G."/>
            <person name="Zhao Q."/>
            <person name="Zheng L."/>
            <person name="Zheng X.H."/>
            <person name="Zhong F.N."/>
            <person name="Zhong W."/>
            <person name="Zhou X."/>
            <person name="Zhu S.C."/>
            <person name="Zhu X."/>
            <person name="Smith H.O."/>
            <person name="Gibbs R.A."/>
            <person name="Myers E.W."/>
            <person name="Rubin G.M."/>
            <person name="Venter J.C."/>
        </authorList>
    </citation>
    <scope>NUCLEOTIDE SEQUENCE [LARGE SCALE GENOMIC DNA]</scope>
    <source>
        <strain>Berkeley</strain>
    </source>
</reference>
<reference key="4">
    <citation type="journal article" date="2002" name="Genome Biol.">
        <title>Annotation of the Drosophila melanogaster euchromatic genome: a systematic review.</title>
        <authorList>
            <person name="Misra S."/>
            <person name="Crosby M.A."/>
            <person name="Mungall C.J."/>
            <person name="Matthews B.B."/>
            <person name="Campbell K.S."/>
            <person name="Hradecky P."/>
            <person name="Huang Y."/>
            <person name="Kaminker J.S."/>
            <person name="Millburn G.H."/>
            <person name="Prochnik S.E."/>
            <person name="Smith C.D."/>
            <person name="Tupy J.L."/>
            <person name="Whitfield E.J."/>
            <person name="Bayraktaroglu L."/>
            <person name="Berman B.P."/>
            <person name="Bettencourt B.R."/>
            <person name="Celniker S.E."/>
            <person name="de Grey A.D.N.J."/>
            <person name="Drysdale R.A."/>
            <person name="Harris N.L."/>
            <person name="Richter J."/>
            <person name="Russo S."/>
            <person name="Schroeder A.J."/>
            <person name="Shu S.Q."/>
            <person name="Stapleton M."/>
            <person name="Yamada C."/>
            <person name="Ashburner M."/>
            <person name="Gelbart W.M."/>
            <person name="Rubin G.M."/>
            <person name="Lewis S.E."/>
        </authorList>
    </citation>
    <scope>GENOME REANNOTATION</scope>
    <source>
        <strain>Berkeley</strain>
    </source>
</reference>
<reference key="5">
    <citation type="submission" date="2003-12" db="EMBL/GenBank/DDBJ databases">
        <authorList>
            <person name="Stapleton M."/>
            <person name="Brokstein P."/>
            <person name="Hong L."/>
            <person name="Agbayani A."/>
            <person name="Carlson J.W."/>
            <person name="Champe M."/>
            <person name="Chavez C."/>
            <person name="Dorsett V."/>
            <person name="Dresnek D."/>
            <person name="Farfan D."/>
            <person name="Frise E."/>
            <person name="George R.A."/>
            <person name="Gonzalez M."/>
            <person name="Guarin H."/>
            <person name="Kronmiller B."/>
            <person name="Li P.W."/>
            <person name="Liao G."/>
            <person name="Miranda A."/>
            <person name="Mungall C.J."/>
            <person name="Nunoo J."/>
            <person name="Pacleb J.M."/>
            <person name="Paragas V."/>
            <person name="Park S."/>
            <person name="Patel S."/>
            <person name="Phouanenavong S."/>
            <person name="Wan K.H."/>
            <person name="Yu C."/>
            <person name="Lewis S.E."/>
            <person name="Rubin G.M."/>
            <person name="Celniker S.E."/>
        </authorList>
    </citation>
    <scope>NUCLEOTIDE SEQUENCE [LARGE SCALE MRNA]</scope>
    <source>
        <strain>Berkeley</strain>
        <tissue>Larva</tissue>
        <tissue>Pupae</tissue>
    </source>
</reference>
<reference key="6">
    <citation type="submission" date="2009-08" db="EMBL/GenBank/DDBJ databases">
        <authorList>
            <person name="Carlson J."/>
            <person name="Booth B."/>
            <person name="Frise E."/>
            <person name="Park S."/>
            <person name="Wan K."/>
            <person name="Yu C."/>
            <person name="Celniker S."/>
        </authorList>
    </citation>
    <scope>NUCLEOTIDE SEQUENCE [LARGE SCALE MRNA]</scope>
    <source>
        <strain>Berkeley</strain>
        <tissue>Head</tissue>
    </source>
</reference>
<reference key="7">
    <citation type="journal article" date="1993" name="Exp. Cell Res.">
        <title>Identification of Drosophila wing imaginal disc proteins by two-dimensional gel analysis and microsequencing.</title>
        <authorList>
            <person name="Santaren J.F."/>
            <person name="van Damme J."/>
            <person name="Puype M."/>
            <person name="Vandekerckhove J."/>
            <person name="Garcia-Bellido A."/>
        </authorList>
    </citation>
    <scope>PROTEIN SEQUENCE OF 292-311</scope>
    <scope>ETHANOLAMINYLATION AT GLU-301</scope>
    <source>
        <strain>Vallecas</strain>
        <tissue>Wing imaginal disk</tissue>
    </source>
</reference>
<reference key="8">
    <citation type="journal article" date="1988" name="Nucleic Acids Res.">
        <title>Detection of protein similarities using nucleotide sequence databases.</title>
        <authorList>
            <person name="Henikoff S."/>
            <person name="Wallace J.C."/>
        </authorList>
    </citation>
    <scope>IDENTIFICATION OF FUNCTION BY SIMILARITY</scope>
</reference>
<gene>
    <name evidence="5" type="primary">eEF1alpha1</name>
    <name evidence="5" type="synonym">Ef1alpha48D</name>
    <name evidence="5" type="synonym">EF1B</name>
    <name evidence="2" type="synonym">F1</name>
    <name evidence="5" type="ORF">CG8280</name>
</gene>
<comment type="function">
    <text>This protein promotes the GTP-dependent binding of aminoacyl-tRNA to the A-site of ribosomes during protein biosynthesis.</text>
</comment>
<comment type="subcellular location">
    <subcellularLocation>
        <location>Cytoplasm</location>
    </subcellularLocation>
</comment>
<comment type="similarity">
    <text evidence="3">Belongs to the TRAFAC class translation factor GTPase superfamily. Classic translation factor GTPase family. EF-Tu/EF-1A subfamily.</text>
</comment>
<evidence type="ECO:0000250" key="1"/>
<evidence type="ECO:0000303" key="2">
    <source>
    </source>
</evidence>
<evidence type="ECO:0000305" key="3"/>
<evidence type="ECO:0000305" key="4">
    <source>
    </source>
</evidence>
<evidence type="ECO:0000312" key="5">
    <source>
        <dbReference type="FlyBase" id="FBgn0284245"/>
    </source>
</evidence>